<reference key="1">
    <citation type="journal article" date="2013" name="G3 (Bethesda)">
        <title>Comparative genomics of a plant-pathogenic fungus, Pyrenophora tritici-repentis, reveals transduplication and the impact of repeat elements on pathogenicity and population divergence.</title>
        <authorList>
            <person name="Manning V.A."/>
            <person name="Pandelova I."/>
            <person name="Dhillon B."/>
            <person name="Wilhelm L.J."/>
            <person name="Goodwin S.B."/>
            <person name="Berlin A.M."/>
            <person name="Figueroa M."/>
            <person name="Freitag M."/>
            <person name="Hane J.K."/>
            <person name="Henrissat B."/>
            <person name="Holman W.H."/>
            <person name="Kodira C.D."/>
            <person name="Martin J."/>
            <person name="Oliver R.P."/>
            <person name="Robbertse B."/>
            <person name="Schackwitz W."/>
            <person name="Schwartz D.C."/>
            <person name="Spatafora J.W."/>
            <person name="Turgeon B.G."/>
            <person name="Yandava C."/>
            <person name="Young S."/>
            <person name="Zhou S."/>
            <person name="Zeng Q."/>
            <person name="Grigoriev I.V."/>
            <person name="Ma L.-J."/>
            <person name="Ciuffetti L.M."/>
        </authorList>
    </citation>
    <scope>NUCLEOTIDE SEQUENCE [LARGE SCALE GENOMIC DNA]</scope>
    <source>
        <strain>Pt-1C-BFP</strain>
    </source>
</reference>
<dbReference type="EC" id="3.4.11.9"/>
<dbReference type="EMBL" id="DS231615">
    <property type="protein sequence ID" value="EDU40522.1"/>
    <property type="molecule type" value="Genomic_DNA"/>
</dbReference>
<dbReference type="RefSeq" id="XP_001931417.1">
    <property type="nucleotide sequence ID" value="XM_001931382.1"/>
</dbReference>
<dbReference type="SMR" id="B2VUU7"/>
<dbReference type="FunCoup" id="B2VUU7">
    <property type="interactions" value="381"/>
</dbReference>
<dbReference type="STRING" id="426418.B2VUU7"/>
<dbReference type="EnsemblFungi" id="EDU40522">
    <property type="protein sequence ID" value="EDU40522"/>
    <property type="gene ID" value="PTRG_01084"/>
</dbReference>
<dbReference type="eggNOG" id="KOG2413">
    <property type="taxonomic scope" value="Eukaryota"/>
</dbReference>
<dbReference type="HOGENOM" id="CLU_011781_2_3_1"/>
<dbReference type="InParanoid" id="B2VUU7"/>
<dbReference type="OMA" id="EPGMILS"/>
<dbReference type="OrthoDB" id="5118at28556"/>
<dbReference type="Proteomes" id="UP000001471">
    <property type="component" value="Unassembled WGS sequence"/>
</dbReference>
<dbReference type="GO" id="GO:0005737">
    <property type="term" value="C:cytoplasm"/>
    <property type="evidence" value="ECO:0007669"/>
    <property type="project" value="UniProtKB-ARBA"/>
</dbReference>
<dbReference type="GO" id="GO:0046872">
    <property type="term" value="F:metal ion binding"/>
    <property type="evidence" value="ECO:0007669"/>
    <property type="project" value="UniProtKB-KW"/>
</dbReference>
<dbReference type="GO" id="GO:0070006">
    <property type="term" value="F:metalloaminopeptidase activity"/>
    <property type="evidence" value="ECO:0007669"/>
    <property type="project" value="InterPro"/>
</dbReference>
<dbReference type="GO" id="GO:0006508">
    <property type="term" value="P:proteolysis"/>
    <property type="evidence" value="ECO:0007669"/>
    <property type="project" value="UniProtKB-KW"/>
</dbReference>
<dbReference type="CDD" id="cd01085">
    <property type="entry name" value="APP"/>
    <property type="match status" value="1"/>
</dbReference>
<dbReference type="FunFam" id="3.40.350.10:FF:000010">
    <property type="entry name" value="Probable Xaa-Pro aminopeptidase P"/>
    <property type="match status" value="1"/>
</dbReference>
<dbReference type="FunFam" id="3.90.230.10:FF:000007">
    <property type="entry name" value="Xaa-Pro aminopeptidase P"/>
    <property type="match status" value="1"/>
</dbReference>
<dbReference type="Gene3D" id="3.90.230.10">
    <property type="entry name" value="Creatinase/methionine aminopeptidase superfamily"/>
    <property type="match status" value="1"/>
</dbReference>
<dbReference type="Gene3D" id="3.40.350.10">
    <property type="entry name" value="Creatinase/prolidase N-terminal domain"/>
    <property type="match status" value="2"/>
</dbReference>
<dbReference type="InterPro" id="IPR029149">
    <property type="entry name" value="Creatin/AminoP/Spt16_N"/>
</dbReference>
<dbReference type="InterPro" id="IPR036005">
    <property type="entry name" value="Creatinase/aminopeptidase-like"/>
</dbReference>
<dbReference type="InterPro" id="IPR000587">
    <property type="entry name" value="Creatinase_N"/>
</dbReference>
<dbReference type="InterPro" id="IPR000994">
    <property type="entry name" value="Pept_M24"/>
</dbReference>
<dbReference type="InterPro" id="IPR033740">
    <property type="entry name" value="Pept_M24B"/>
</dbReference>
<dbReference type="InterPro" id="IPR032416">
    <property type="entry name" value="Peptidase_M24_C"/>
</dbReference>
<dbReference type="InterPro" id="IPR001131">
    <property type="entry name" value="Peptidase_M24B_aminopep-P_CS"/>
</dbReference>
<dbReference type="InterPro" id="IPR050422">
    <property type="entry name" value="X-Pro_aminopeptidase_P"/>
</dbReference>
<dbReference type="PANTHER" id="PTHR43763">
    <property type="entry name" value="XAA-PRO AMINOPEPTIDASE 1"/>
    <property type="match status" value="1"/>
</dbReference>
<dbReference type="PANTHER" id="PTHR43763:SF6">
    <property type="entry name" value="XAA-PRO AMINOPEPTIDASE 1"/>
    <property type="match status" value="1"/>
</dbReference>
<dbReference type="Pfam" id="PF01321">
    <property type="entry name" value="Creatinase_N"/>
    <property type="match status" value="1"/>
</dbReference>
<dbReference type="Pfam" id="PF16189">
    <property type="entry name" value="Creatinase_N_2"/>
    <property type="match status" value="1"/>
</dbReference>
<dbReference type="Pfam" id="PF00557">
    <property type="entry name" value="Peptidase_M24"/>
    <property type="match status" value="1"/>
</dbReference>
<dbReference type="Pfam" id="PF16188">
    <property type="entry name" value="Peptidase_M24_C"/>
    <property type="match status" value="1"/>
</dbReference>
<dbReference type="SUPFAM" id="SSF55920">
    <property type="entry name" value="Creatinase/aminopeptidase"/>
    <property type="match status" value="1"/>
</dbReference>
<dbReference type="SUPFAM" id="SSF53092">
    <property type="entry name" value="Creatinase/prolidase N-terminal domain"/>
    <property type="match status" value="1"/>
</dbReference>
<dbReference type="PROSITE" id="PS00491">
    <property type="entry name" value="PROLINE_PEPTIDASE"/>
    <property type="match status" value="1"/>
</dbReference>
<sequence>MAKVDTSHRLAELRKLMKERNVDIYTYISGFTGSAGYAVITHDKAALSTDGRYFNQAEKQLDSNWELLKQGIQDVPTIQEWTADQAEGGKVVGVDPSVVTAGDARKLAEKIKKKGGEYKAIDENLVDLVWSSERPARPSEKVIVQPERYACKGFEDKIDDLRKELEKKKSLGFVVSMLDEVAWLFNLRGSDIPYNPVFFSYAVVTPTAATLYVDENKLPEDVKEHLGNKITIRPYEAIFGDVTALSKELFEASDKNETQKKFLTSNRASWALNKALGGDDKVEETRSPVGDSKAVKNEVELEGMRQCHIRDGAALSEYFAWLEDQLINKKATLDEVDGADKLEEIRKKHDMFMGLSFDTISSTGANAAVIHYKPEKGECATIDPKAIYLCDSGAQYRDGTTDTTRTLHFTEPTEMERKAYTLVLKGNMALERVKFPKGTTGFALDALARQFLWAEGLDYRHGTGHGVGSFLNVHEGPIGIGTRVQYSEVSLAVGNVVSDEPGYYEDGKFGIRIENMVMVKEVETKHKFGDKPYLGFEHVTMTPHCRNLVDMSLLTEDEKKFINEYHKEVYEKTSKYFENDALTLEWLKRETAPY</sequence>
<keyword id="KW-0031">Aminopeptidase</keyword>
<keyword id="KW-0378">Hydrolase</keyword>
<keyword id="KW-0464">Manganese</keyword>
<keyword id="KW-0479">Metal-binding</keyword>
<keyword id="KW-0482">Metalloprotease</keyword>
<keyword id="KW-0645">Protease</keyword>
<keyword id="KW-1185">Reference proteome</keyword>
<evidence type="ECO:0000250" key="1"/>
<evidence type="ECO:0000305" key="2"/>
<accession>B2VUU7</accession>
<gene>
    <name type="primary">ampp</name>
    <name type="ORF">PTRG_01084</name>
</gene>
<protein>
    <recommendedName>
        <fullName>Probable Xaa-Pro aminopeptidase P</fullName>
        <shortName>AMPP</shortName>
        <shortName>Aminopeptidase P</shortName>
        <ecNumber>3.4.11.9</ecNumber>
    </recommendedName>
    <alternativeName>
        <fullName>Aminoacylproline aminopeptidase</fullName>
    </alternativeName>
    <alternativeName>
        <fullName>Prolidase</fullName>
    </alternativeName>
</protein>
<feature type="chain" id="PRO_0000411807" description="Probable Xaa-Pro aminopeptidase P">
    <location>
        <begin position="1"/>
        <end position="594"/>
    </location>
</feature>
<feature type="binding site" evidence="1">
    <location>
        <position position="391"/>
    </location>
    <ligand>
        <name>Mn(2+)</name>
        <dbReference type="ChEBI" id="CHEBI:29035"/>
        <label>2</label>
    </ligand>
</feature>
<feature type="binding site" evidence="1">
    <location>
        <position position="402"/>
    </location>
    <ligand>
        <name>Mn(2+)</name>
        <dbReference type="ChEBI" id="CHEBI:29035"/>
        <label>1</label>
    </ligand>
</feature>
<feature type="binding site" evidence="1">
    <location>
        <position position="402"/>
    </location>
    <ligand>
        <name>Mn(2+)</name>
        <dbReference type="ChEBI" id="CHEBI:29035"/>
        <label>2</label>
    </ligand>
</feature>
<feature type="binding site" evidence="1">
    <location>
        <position position="500"/>
    </location>
    <ligand>
        <name>Mn(2+)</name>
        <dbReference type="ChEBI" id="CHEBI:29035"/>
        <label>1</label>
    </ligand>
</feature>
<feature type="binding site" evidence="1">
    <location>
        <position position="514"/>
    </location>
    <ligand>
        <name>Mn(2+)</name>
        <dbReference type="ChEBI" id="CHEBI:29035"/>
        <label>1</label>
    </ligand>
</feature>
<feature type="binding site" evidence="1">
    <location>
        <position position="514"/>
    </location>
    <ligand>
        <name>Mn(2+)</name>
        <dbReference type="ChEBI" id="CHEBI:29035"/>
        <label>2</label>
    </ligand>
</feature>
<name>AMPP1_PYRTR</name>
<proteinExistence type="inferred from homology"/>
<organism>
    <name type="scientific">Pyrenophora tritici-repentis (strain Pt-1C-BFP)</name>
    <name type="common">Wheat tan spot fungus</name>
    <name type="synonym">Drechslera tritici-repentis</name>
    <dbReference type="NCBI Taxonomy" id="426418"/>
    <lineage>
        <taxon>Eukaryota</taxon>
        <taxon>Fungi</taxon>
        <taxon>Dikarya</taxon>
        <taxon>Ascomycota</taxon>
        <taxon>Pezizomycotina</taxon>
        <taxon>Dothideomycetes</taxon>
        <taxon>Pleosporomycetidae</taxon>
        <taxon>Pleosporales</taxon>
        <taxon>Pleosporineae</taxon>
        <taxon>Pleosporaceae</taxon>
        <taxon>Pyrenophora</taxon>
    </lineage>
</organism>
<comment type="function">
    <text evidence="1">Catalyzes the removal of a penultimate prolyl residue from the N-termini of peptides.</text>
</comment>
<comment type="catalytic activity">
    <reaction>
        <text>Release of any N-terminal amino acid, including proline, that is linked to proline, even from a dipeptide or tripeptide.</text>
        <dbReference type="EC" id="3.4.11.9"/>
    </reaction>
</comment>
<comment type="cofactor">
    <cofactor evidence="1">
        <name>Mn(2+)</name>
        <dbReference type="ChEBI" id="CHEBI:29035"/>
    </cofactor>
    <text evidence="1">Binds 2 manganese ions per subunit.</text>
</comment>
<comment type="similarity">
    <text evidence="2">Belongs to the peptidase M24B family.</text>
</comment>